<comment type="catalytic activity">
    <reaction evidence="1">
        <text>2 reduced [2Fe-2S]-[ferredoxin] + NADP(+) + H(+) = 2 oxidized [2Fe-2S]-[ferredoxin] + NADPH</text>
        <dbReference type="Rhea" id="RHEA:20125"/>
        <dbReference type="Rhea" id="RHEA-COMP:10000"/>
        <dbReference type="Rhea" id="RHEA-COMP:10001"/>
        <dbReference type="ChEBI" id="CHEBI:15378"/>
        <dbReference type="ChEBI" id="CHEBI:33737"/>
        <dbReference type="ChEBI" id="CHEBI:33738"/>
        <dbReference type="ChEBI" id="CHEBI:57783"/>
        <dbReference type="ChEBI" id="CHEBI:58349"/>
        <dbReference type="EC" id="1.18.1.2"/>
    </reaction>
</comment>
<comment type="cofactor">
    <cofactor evidence="1">
        <name>FAD</name>
        <dbReference type="ChEBI" id="CHEBI:57692"/>
    </cofactor>
    <text evidence="1">Binds 1 FAD per subunit.</text>
</comment>
<comment type="subunit">
    <text evidence="1">Homodimer.</text>
</comment>
<comment type="similarity">
    <text evidence="1">Belongs to the ferredoxin--NADP reductase type 2 family.</text>
</comment>
<evidence type="ECO:0000255" key="1">
    <source>
        <dbReference type="HAMAP-Rule" id="MF_01685"/>
    </source>
</evidence>
<name>FENR_GEOKA</name>
<accession>Q5KVP7</accession>
<reference key="1">
    <citation type="journal article" date="2004" name="Nucleic Acids Res.">
        <title>Thermoadaptation trait revealed by the genome sequence of thermophilic Geobacillus kaustophilus.</title>
        <authorList>
            <person name="Takami H."/>
            <person name="Takaki Y."/>
            <person name="Chee G.-J."/>
            <person name="Nishi S."/>
            <person name="Shimamura S."/>
            <person name="Suzuki H."/>
            <person name="Matsui S."/>
            <person name="Uchiyama I."/>
        </authorList>
    </citation>
    <scope>NUCLEOTIDE SEQUENCE [LARGE SCALE GENOMIC DNA]</scope>
    <source>
        <strain>HTA426</strain>
    </source>
</reference>
<protein>
    <recommendedName>
        <fullName evidence="1">Ferredoxin--NADP reductase</fullName>
        <shortName evidence="1">FNR</shortName>
        <shortName evidence="1">Fd-NADP(+) reductase</shortName>
        <ecNumber evidence="1">1.18.1.2</ecNumber>
    </recommendedName>
</protein>
<feature type="chain" id="PRO_0000364840" description="Ferredoxin--NADP reductase">
    <location>
        <begin position="1"/>
        <end position="332"/>
    </location>
</feature>
<feature type="binding site" evidence="1">
    <location>
        <position position="20"/>
    </location>
    <ligand>
        <name>FAD</name>
        <dbReference type="ChEBI" id="CHEBI:57692"/>
    </ligand>
</feature>
<feature type="binding site" evidence="1">
    <location>
        <position position="39"/>
    </location>
    <ligand>
        <name>FAD</name>
        <dbReference type="ChEBI" id="CHEBI:57692"/>
    </ligand>
</feature>
<feature type="binding site" evidence="1">
    <location>
        <position position="47"/>
    </location>
    <ligand>
        <name>FAD</name>
        <dbReference type="ChEBI" id="CHEBI:57692"/>
    </ligand>
</feature>
<feature type="binding site" evidence="1">
    <location>
        <position position="52"/>
    </location>
    <ligand>
        <name>FAD</name>
        <dbReference type="ChEBI" id="CHEBI:57692"/>
    </ligand>
</feature>
<feature type="binding site" evidence="1">
    <location>
        <position position="92"/>
    </location>
    <ligand>
        <name>FAD</name>
        <dbReference type="ChEBI" id="CHEBI:57692"/>
    </ligand>
</feature>
<feature type="binding site" evidence="1">
    <location>
        <position position="126"/>
    </location>
    <ligand>
        <name>FAD</name>
        <dbReference type="ChEBI" id="CHEBI:57692"/>
    </ligand>
</feature>
<feature type="binding site" evidence="1">
    <location>
        <position position="288"/>
    </location>
    <ligand>
        <name>FAD</name>
        <dbReference type="ChEBI" id="CHEBI:57692"/>
    </ligand>
</feature>
<feature type="binding site" evidence="1">
    <location>
        <position position="329"/>
    </location>
    <ligand>
        <name>FAD</name>
        <dbReference type="ChEBI" id="CHEBI:57692"/>
    </ligand>
</feature>
<organism>
    <name type="scientific">Geobacillus kaustophilus (strain HTA426)</name>
    <dbReference type="NCBI Taxonomy" id="235909"/>
    <lineage>
        <taxon>Bacteria</taxon>
        <taxon>Bacillati</taxon>
        <taxon>Bacillota</taxon>
        <taxon>Bacilli</taxon>
        <taxon>Bacillales</taxon>
        <taxon>Anoxybacillaceae</taxon>
        <taxon>Geobacillus</taxon>
        <taxon>Geobacillus thermoleovorans group</taxon>
    </lineage>
</organism>
<sequence length="332" mass="36670">MSVKEDRNVYDVTIIGGGPTGMFAAFYGGLRQMKVKIIESLPQLGGQLAALYPEKYIYDVAGFPKVRAQELVNQLKEQMDLFSPTVCLNESVDTLEKQEDGTFKLVTNQQIHYSKTVIITAGNGAFQPRRLEIESASRYEGKNLHYFINDLGQFSGKRVLVCGGGDSAVDWSLMLEPIAQSVTIVHRRDKFRAHEHSVEQLKKSSVQVKTPFVPVELVGDEHAIRQVILEHVKEGTKETIDVDAVIVNYGFISSLGPIKNWGLDIEKNAIKVNSRMETNIPGVYAAGDICTYDGKIKLIACGFGEAPIAISSAKTYIDPTARMQPAHSTSLF</sequence>
<proteinExistence type="inferred from homology"/>
<keyword id="KW-0274">FAD</keyword>
<keyword id="KW-0285">Flavoprotein</keyword>
<keyword id="KW-0521">NADP</keyword>
<keyword id="KW-0560">Oxidoreductase</keyword>
<keyword id="KW-1185">Reference proteome</keyword>
<gene>
    <name type="ordered locus">GK2954</name>
</gene>
<dbReference type="EC" id="1.18.1.2" evidence="1"/>
<dbReference type="EMBL" id="BA000043">
    <property type="protein sequence ID" value="BAD77239.1"/>
    <property type="molecule type" value="Genomic_DNA"/>
</dbReference>
<dbReference type="SMR" id="Q5KVP7"/>
<dbReference type="STRING" id="235909.GK2954"/>
<dbReference type="KEGG" id="gka:GK2954"/>
<dbReference type="eggNOG" id="COG0492">
    <property type="taxonomic scope" value="Bacteria"/>
</dbReference>
<dbReference type="HOGENOM" id="CLU_031864_5_5_9"/>
<dbReference type="Proteomes" id="UP000001172">
    <property type="component" value="Chromosome"/>
</dbReference>
<dbReference type="GO" id="GO:0004324">
    <property type="term" value="F:ferredoxin-NADP+ reductase activity"/>
    <property type="evidence" value="ECO:0007669"/>
    <property type="project" value="UniProtKB-UniRule"/>
</dbReference>
<dbReference type="GO" id="GO:0050660">
    <property type="term" value="F:flavin adenine dinucleotide binding"/>
    <property type="evidence" value="ECO:0007669"/>
    <property type="project" value="UniProtKB-UniRule"/>
</dbReference>
<dbReference type="GO" id="GO:0050661">
    <property type="term" value="F:NADP binding"/>
    <property type="evidence" value="ECO:0007669"/>
    <property type="project" value="UniProtKB-UniRule"/>
</dbReference>
<dbReference type="Gene3D" id="3.50.50.60">
    <property type="entry name" value="FAD/NAD(P)-binding domain"/>
    <property type="match status" value="2"/>
</dbReference>
<dbReference type="HAMAP" id="MF_01685">
    <property type="entry name" value="FENR2"/>
    <property type="match status" value="1"/>
</dbReference>
<dbReference type="InterPro" id="IPR036188">
    <property type="entry name" value="FAD/NAD-bd_sf"/>
</dbReference>
<dbReference type="InterPro" id="IPR023753">
    <property type="entry name" value="FAD/NAD-binding_dom"/>
</dbReference>
<dbReference type="InterPro" id="IPR022890">
    <property type="entry name" value="Fd--NADP_Rdtase_type_2"/>
</dbReference>
<dbReference type="InterPro" id="IPR050097">
    <property type="entry name" value="Ferredoxin-NADP_redctase_2"/>
</dbReference>
<dbReference type="PANTHER" id="PTHR48105">
    <property type="entry name" value="THIOREDOXIN REDUCTASE 1-RELATED-RELATED"/>
    <property type="match status" value="1"/>
</dbReference>
<dbReference type="Pfam" id="PF07992">
    <property type="entry name" value="Pyr_redox_2"/>
    <property type="match status" value="1"/>
</dbReference>
<dbReference type="PRINTS" id="PR00368">
    <property type="entry name" value="FADPNR"/>
</dbReference>
<dbReference type="PRINTS" id="PR00469">
    <property type="entry name" value="PNDRDTASEII"/>
</dbReference>
<dbReference type="SUPFAM" id="SSF51905">
    <property type="entry name" value="FAD/NAD(P)-binding domain"/>
    <property type="match status" value="1"/>
</dbReference>